<evidence type="ECO:0000255" key="1">
    <source>
        <dbReference type="PROSITE-ProRule" id="PRU01023"/>
    </source>
</evidence>
<evidence type="ECO:0000256" key="2">
    <source>
        <dbReference type="SAM" id="MobiDB-lite"/>
    </source>
</evidence>
<evidence type="ECO:0000269" key="3">
    <source>
    </source>
</evidence>
<evidence type="ECO:0000269" key="4">
    <source>
    </source>
</evidence>
<evidence type="ECO:0000269" key="5">
    <source>
    </source>
</evidence>
<evidence type="ECO:0007744" key="6">
    <source>
    </source>
</evidence>
<evidence type="ECO:0007744" key="7">
    <source>
    </source>
</evidence>
<comment type="function">
    <text evidence="3 5">Methylates cytosine to m5C at several positions in different tRNAs and pre-tRNAs containing intron. Able to modify tRNAs at all four positions (34, 40, 48 and 49) at which m5C has been found in tRNAs. May be involved in ribosome biogenesis as its disruption leads to increased sensitivity to the antibiotic paromomycin.</text>
</comment>
<comment type="catalytic activity">
    <reaction evidence="3">
        <text>cytidine(34) in tRNA precursor + S-adenosyl-L-methionine = 5-methylcytidine(34) in tRNA precursor + S-adenosyl-L-homocysteine + H(+)</text>
        <dbReference type="Rhea" id="RHEA:42940"/>
        <dbReference type="Rhea" id="RHEA-COMP:10291"/>
        <dbReference type="Rhea" id="RHEA-COMP:10295"/>
        <dbReference type="ChEBI" id="CHEBI:15378"/>
        <dbReference type="ChEBI" id="CHEBI:57856"/>
        <dbReference type="ChEBI" id="CHEBI:59789"/>
        <dbReference type="ChEBI" id="CHEBI:74483"/>
        <dbReference type="ChEBI" id="CHEBI:82748"/>
        <dbReference type="EC" id="2.1.1.202"/>
    </reaction>
</comment>
<comment type="catalytic activity">
    <reaction evidence="3">
        <text>cytidine(40) in tRNA precursor + S-adenosyl-L-methionine = 5-methylcytidine(40) in tRNA precursor + S-adenosyl-L-homocysteine + H(+)</text>
        <dbReference type="Rhea" id="RHEA:42944"/>
        <dbReference type="Rhea" id="RHEA-COMP:10292"/>
        <dbReference type="Rhea" id="RHEA-COMP:10296"/>
        <dbReference type="ChEBI" id="CHEBI:15378"/>
        <dbReference type="ChEBI" id="CHEBI:57856"/>
        <dbReference type="ChEBI" id="CHEBI:59789"/>
        <dbReference type="ChEBI" id="CHEBI:74483"/>
        <dbReference type="ChEBI" id="CHEBI:82748"/>
        <dbReference type="EC" id="2.1.1.202"/>
    </reaction>
</comment>
<comment type="catalytic activity">
    <reaction evidence="3">
        <text>cytidine(48) in tRNA + S-adenosyl-L-methionine = 5-methylcytidine(48) in tRNA + S-adenosyl-L-homocysteine + H(+)</text>
        <dbReference type="Rhea" id="RHEA:42948"/>
        <dbReference type="Rhea" id="RHEA-COMP:10293"/>
        <dbReference type="Rhea" id="RHEA-COMP:10297"/>
        <dbReference type="ChEBI" id="CHEBI:15378"/>
        <dbReference type="ChEBI" id="CHEBI:57856"/>
        <dbReference type="ChEBI" id="CHEBI:59789"/>
        <dbReference type="ChEBI" id="CHEBI:74483"/>
        <dbReference type="ChEBI" id="CHEBI:82748"/>
        <dbReference type="EC" id="2.1.1.202"/>
    </reaction>
</comment>
<comment type="catalytic activity">
    <reaction evidence="3">
        <text>cytidine(49) in tRNA + S-adenosyl-L-methionine = 5-methylcytidine(49) in tRNA + S-adenosyl-L-homocysteine + H(+)</text>
        <dbReference type="Rhea" id="RHEA:42952"/>
        <dbReference type="Rhea" id="RHEA-COMP:10294"/>
        <dbReference type="Rhea" id="RHEA-COMP:10385"/>
        <dbReference type="ChEBI" id="CHEBI:15378"/>
        <dbReference type="ChEBI" id="CHEBI:57856"/>
        <dbReference type="ChEBI" id="CHEBI:59789"/>
        <dbReference type="ChEBI" id="CHEBI:74483"/>
        <dbReference type="ChEBI" id="CHEBI:82748"/>
        <dbReference type="EC" id="2.1.1.202"/>
    </reaction>
</comment>
<comment type="subcellular location">
    <subcellularLocation>
        <location evidence="5">Nucleus</location>
        <location evidence="5">Nucleolus</location>
    </subcellularLocation>
</comment>
<comment type="miscellaneous">
    <text evidence="4">Present with 16100 molecules/cell in log phase SD medium.</text>
</comment>
<comment type="similarity">
    <text evidence="1">Belongs to the class I-like SAM-binding methyltransferase superfamily. RsmB/NOP family. TRM4 subfamily.</text>
</comment>
<sequence length="684" mass="77879">MARRKNFKKGNKKTFGARDDSRAQKNWSELVKENEKWEKYYKTLALFPEDQWEEFKKTCQAPLPLTFRITGSRKHAGEVLNLFKERHLPNLTNVEFEGEKIKAPVELPWYPDHLAWQLDVPKTVIRKNEQFAKTQRFLVVENAVGNISRQEAVSMIPPIVLEVKPHHTVLDMCAAPGSKTAQLIEALHKDTDEPSGFVVANDADARRSHMLVHQLKRLNSANLMVVNHDAQFFPRIRLHGNSNNKNDVLKFDRILCDVPCSGDGTMRKNVNVWKDWNTQAGLGLHAVQLNILNRGLHLLKNNGRLVYSTCSLNPIENEAVVAEALRKWGDKIRLVNCDDKLPGLIRSKGVSKWPVYDRNLTEKTKGDEGTLDSFFSPSEEEASKFNLQNCMRVYPHQQNTGGFFITVFEKVEDSTEAATEKLSSETPALESEGPQTKKIKVEEVQKKERLPRDANEEPFVFVDPQHEALKVCWDFYGIDNIFDRNTCLVRNATGEPTRVVYTVCPALKDVIQANDDRLKIIYSGVKLFVSQRSDIECSWRIQSESLPIMKHHMKSNRIVEANLEMLKHLLIESFPNFDDIRSKNIDNDFVEKMTKLSSGCAFIDVSRNDPAKENLFLPVWKGNKCINLMVCKEDTHELLYRIFGIDANAKATPSAEEKEKEKETTESPAETTTGTSTEAPSAAN</sequence>
<feature type="chain" id="PRO_0000211820" description="Multisite-specific tRNA:(cytosine-C(5))-methyltransferase">
    <location>
        <begin position="1"/>
        <end position="684"/>
    </location>
</feature>
<feature type="region of interest" description="Disordered" evidence="2">
    <location>
        <begin position="1"/>
        <end position="24"/>
    </location>
</feature>
<feature type="region of interest" description="Disordered" evidence="2">
    <location>
        <begin position="650"/>
        <end position="684"/>
    </location>
</feature>
<feature type="compositionally biased region" description="Basic residues" evidence="2">
    <location>
        <begin position="1"/>
        <end position="12"/>
    </location>
</feature>
<feature type="compositionally biased region" description="Basic and acidic residues" evidence="2">
    <location>
        <begin position="655"/>
        <end position="665"/>
    </location>
</feature>
<feature type="compositionally biased region" description="Low complexity" evidence="2">
    <location>
        <begin position="666"/>
        <end position="684"/>
    </location>
</feature>
<feature type="active site" description="Nucleophile" evidence="1">
    <location>
        <position position="310"/>
    </location>
</feature>
<feature type="binding site" evidence="1">
    <location>
        <begin position="173"/>
        <end position="179"/>
    </location>
    <ligand>
        <name>S-adenosyl-L-methionine</name>
        <dbReference type="ChEBI" id="CHEBI:59789"/>
    </ligand>
</feature>
<feature type="binding site" evidence="1">
    <location>
        <position position="202"/>
    </location>
    <ligand>
        <name>S-adenosyl-L-methionine</name>
        <dbReference type="ChEBI" id="CHEBI:59789"/>
    </ligand>
</feature>
<feature type="binding site" evidence="1">
    <location>
        <position position="229"/>
    </location>
    <ligand>
        <name>S-adenosyl-L-methionine</name>
        <dbReference type="ChEBI" id="CHEBI:59789"/>
    </ligand>
</feature>
<feature type="binding site" evidence="1">
    <location>
        <position position="257"/>
    </location>
    <ligand>
        <name>S-adenosyl-L-methionine</name>
        <dbReference type="ChEBI" id="CHEBI:59789"/>
    </ligand>
</feature>
<feature type="modified residue" description="Phosphothreonine" evidence="7">
    <location>
        <position position="426"/>
    </location>
</feature>
<feature type="modified residue" description="Phosphoserine" evidence="6">
    <location>
        <position position="431"/>
    </location>
</feature>
<feature type="modified residue" description="Phosphoserine" evidence="7">
    <location>
        <position position="667"/>
    </location>
</feature>
<keyword id="KW-0489">Methyltransferase</keyword>
<keyword id="KW-0539">Nucleus</keyword>
<keyword id="KW-0597">Phosphoprotein</keyword>
<keyword id="KW-1185">Reference proteome</keyword>
<keyword id="KW-0694">RNA-binding</keyword>
<keyword id="KW-0949">S-adenosyl-L-methionine</keyword>
<keyword id="KW-0808">Transferase</keyword>
<keyword id="KW-0819">tRNA processing</keyword>
<keyword id="KW-0820">tRNA-binding</keyword>
<gene>
    <name type="primary">NCL1</name>
    <name type="synonym">TRM4</name>
    <name type="ordered locus">YBL024W</name>
    <name type="ORF">YBL0437</name>
</gene>
<reference key="1">
    <citation type="journal article" date="1994" name="Yeast">
        <title>Analysis of a 17.4 kb DNA segment of yeast chromosome II encompassing the ribosomal protein L19 as well as proteins with homologies to components of the hnRNP and snRNP complexes and to the human proliferation-associated p120 antigen.</title>
        <authorList>
            <person name="van Dyck L."/>
            <person name="Jonniaux J.-L."/>
            <person name="Barreiros T.D.M."/>
            <person name="Kleine K."/>
            <person name="Goffeau A."/>
        </authorList>
    </citation>
    <scope>NUCLEOTIDE SEQUENCE [GENOMIC DNA]</scope>
    <source>
        <strain>ATCC 204508 / S288c</strain>
    </source>
</reference>
<reference key="2">
    <citation type="journal article" date="1994" name="EMBO J.">
        <title>Complete DNA sequence of yeast chromosome II.</title>
        <authorList>
            <person name="Feldmann H."/>
            <person name="Aigle M."/>
            <person name="Aljinovic G."/>
            <person name="Andre B."/>
            <person name="Baclet M.C."/>
            <person name="Barthe C."/>
            <person name="Baur A."/>
            <person name="Becam A.-M."/>
            <person name="Biteau N."/>
            <person name="Boles E."/>
            <person name="Brandt T."/>
            <person name="Brendel M."/>
            <person name="Brueckner M."/>
            <person name="Bussereau F."/>
            <person name="Christiansen C."/>
            <person name="Contreras R."/>
            <person name="Crouzet M."/>
            <person name="Cziepluch C."/>
            <person name="Demolis N."/>
            <person name="Delaveau T."/>
            <person name="Doignon F."/>
            <person name="Domdey H."/>
            <person name="Duesterhus S."/>
            <person name="Dubois E."/>
            <person name="Dujon B."/>
            <person name="El Bakkoury M."/>
            <person name="Entian K.-D."/>
            <person name="Feuermann M."/>
            <person name="Fiers W."/>
            <person name="Fobo G.M."/>
            <person name="Fritz C."/>
            <person name="Gassenhuber J."/>
            <person name="Glansdorff N."/>
            <person name="Goffeau A."/>
            <person name="Grivell L.A."/>
            <person name="de Haan M."/>
            <person name="Hein C."/>
            <person name="Herbert C.J."/>
            <person name="Hollenberg C.P."/>
            <person name="Holmstroem K."/>
            <person name="Jacq C."/>
            <person name="Jacquet M."/>
            <person name="Jauniaux J.-C."/>
            <person name="Jonniaux J.-L."/>
            <person name="Kallesoee T."/>
            <person name="Kiesau P."/>
            <person name="Kirchrath L."/>
            <person name="Koetter P."/>
            <person name="Korol S."/>
            <person name="Liebl S."/>
            <person name="Logghe M."/>
            <person name="Lohan A.J.E."/>
            <person name="Louis E.J."/>
            <person name="Li Z.Y."/>
            <person name="Maat M.J."/>
            <person name="Mallet L."/>
            <person name="Mannhaupt G."/>
            <person name="Messenguy F."/>
            <person name="Miosga T."/>
            <person name="Molemans F."/>
            <person name="Mueller S."/>
            <person name="Nasr F."/>
            <person name="Obermaier B."/>
            <person name="Perea J."/>
            <person name="Pierard A."/>
            <person name="Piravandi E."/>
            <person name="Pohl F.M."/>
            <person name="Pohl T.M."/>
            <person name="Potier S."/>
            <person name="Proft M."/>
            <person name="Purnelle B."/>
            <person name="Ramezani Rad M."/>
            <person name="Rieger M."/>
            <person name="Rose M."/>
            <person name="Schaaff-Gerstenschlaeger I."/>
            <person name="Scherens B."/>
            <person name="Schwarzlose C."/>
            <person name="Skala J."/>
            <person name="Slonimski P.P."/>
            <person name="Smits P.H.M."/>
            <person name="Souciet J.-L."/>
            <person name="Steensma H.Y."/>
            <person name="Stucka R."/>
            <person name="Urrestarazu L.A."/>
            <person name="van der Aart Q.J.M."/>
            <person name="Van Dyck L."/>
            <person name="Vassarotti A."/>
            <person name="Vetter I."/>
            <person name="Vierendeels F."/>
            <person name="Vissers S."/>
            <person name="Wagner G."/>
            <person name="de Wergifosse P."/>
            <person name="Wolfe K.H."/>
            <person name="Zagulski M."/>
            <person name="Zimmermann F.K."/>
            <person name="Mewes H.-W."/>
            <person name="Kleine K."/>
        </authorList>
    </citation>
    <scope>NUCLEOTIDE SEQUENCE [LARGE SCALE GENOMIC DNA]</scope>
    <source>
        <strain>ATCC 204508 / S288c</strain>
    </source>
</reference>
<reference key="3">
    <citation type="journal article" date="2014" name="G3 (Bethesda)">
        <title>The reference genome sequence of Saccharomyces cerevisiae: Then and now.</title>
        <authorList>
            <person name="Engel S.R."/>
            <person name="Dietrich F.S."/>
            <person name="Fisk D.G."/>
            <person name="Binkley G."/>
            <person name="Balakrishnan R."/>
            <person name="Costanzo M.C."/>
            <person name="Dwight S.S."/>
            <person name="Hitz B.C."/>
            <person name="Karra K."/>
            <person name="Nash R.S."/>
            <person name="Weng S."/>
            <person name="Wong E.D."/>
            <person name="Lloyd P."/>
            <person name="Skrzypek M.S."/>
            <person name="Miyasato S.R."/>
            <person name="Simison M."/>
            <person name="Cherry J.M."/>
        </authorList>
    </citation>
    <scope>GENOME REANNOTATION</scope>
    <source>
        <strain>ATCC 204508 / S288c</strain>
    </source>
</reference>
<reference key="4">
    <citation type="journal article" date="1998" name="Gene">
        <title>NCL1, a novel gene for a non-essential nuclear protein in Saccharomyces cerevisiae.</title>
        <authorList>
            <person name="Wu P."/>
            <person name="Brockenbrough J.S."/>
            <person name="Paddy M.R."/>
            <person name="Aris J.P."/>
        </authorList>
    </citation>
    <scope>FUNCTION</scope>
    <scope>SUBCELLULAR LOCATION</scope>
</reference>
<reference key="5">
    <citation type="journal article" date="1999" name="RNA">
        <title>Multisite-specific tRNA:m5C-methyltransferase (Trm4) in yeast Saccharomyces cerevisiae: identification of the gene and substrate specificity of the enzyme.</title>
        <authorList>
            <person name="Motorin Y."/>
            <person name="Grosjean H."/>
        </authorList>
    </citation>
    <scope>FUNCTION</scope>
    <scope>CATALYTIC ACTIVITY</scope>
</reference>
<reference key="6">
    <citation type="journal article" date="2003" name="Nature">
        <title>Global analysis of protein expression in yeast.</title>
        <authorList>
            <person name="Ghaemmaghami S."/>
            <person name="Huh W.-K."/>
            <person name="Bower K."/>
            <person name="Howson R.W."/>
            <person name="Belle A."/>
            <person name="Dephoure N."/>
            <person name="O'Shea E.K."/>
            <person name="Weissman J.S."/>
        </authorList>
    </citation>
    <scope>LEVEL OF PROTEIN EXPRESSION [LARGE SCALE ANALYSIS]</scope>
</reference>
<reference key="7">
    <citation type="journal article" date="2008" name="Mol. Cell. Proteomics">
        <title>A multidimensional chromatography technology for in-depth phosphoproteome analysis.</title>
        <authorList>
            <person name="Albuquerque C.P."/>
            <person name="Smolka M.B."/>
            <person name="Payne S.H."/>
            <person name="Bafna V."/>
            <person name="Eng J."/>
            <person name="Zhou H."/>
        </authorList>
    </citation>
    <scope>PHOSPHORYLATION [LARGE SCALE ANALYSIS] AT SER-431</scope>
    <scope>IDENTIFICATION BY MASS SPECTROMETRY [LARGE SCALE ANALYSIS]</scope>
</reference>
<reference key="8">
    <citation type="journal article" date="2009" name="Science">
        <title>Global analysis of Cdk1 substrate phosphorylation sites provides insights into evolution.</title>
        <authorList>
            <person name="Holt L.J."/>
            <person name="Tuch B.B."/>
            <person name="Villen J."/>
            <person name="Johnson A.D."/>
            <person name="Gygi S.P."/>
            <person name="Morgan D.O."/>
        </authorList>
    </citation>
    <scope>PHOSPHORYLATION [LARGE SCALE ANALYSIS] AT THR-426 AND SER-667</scope>
    <scope>IDENTIFICATION BY MASS SPECTROMETRY [LARGE SCALE ANALYSIS]</scope>
</reference>
<dbReference type="EC" id="2.1.1.202"/>
<dbReference type="EMBL" id="X77291">
    <property type="protein sequence ID" value="CAA54502.1"/>
    <property type="molecule type" value="Genomic_DNA"/>
</dbReference>
<dbReference type="EMBL" id="Z35785">
    <property type="protein sequence ID" value="CAA84843.1"/>
    <property type="molecule type" value="Genomic_DNA"/>
</dbReference>
<dbReference type="EMBL" id="BK006936">
    <property type="protein sequence ID" value="DAA07096.1"/>
    <property type="molecule type" value="Genomic_DNA"/>
</dbReference>
<dbReference type="PIR" id="S45758">
    <property type="entry name" value="S45758"/>
</dbReference>
<dbReference type="RefSeq" id="NP_009529.1">
    <property type="nucleotide sequence ID" value="NM_001178264.1"/>
</dbReference>
<dbReference type="SMR" id="P38205"/>
<dbReference type="BioGRID" id="32674">
    <property type="interactions" value="222"/>
</dbReference>
<dbReference type="DIP" id="DIP-3932N"/>
<dbReference type="FunCoup" id="P38205">
    <property type="interactions" value="1543"/>
</dbReference>
<dbReference type="IntAct" id="P38205">
    <property type="interactions" value="25"/>
</dbReference>
<dbReference type="MINT" id="P38205"/>
<dbReference type="STRING" id="4932.YBL024W"/>
<dbReference type="GlyGen" id="P38205">
    <property type="glycosylation" value="1 site"/>
</dbReference>
<dbReference type="iPTMnet" id="P38205"/>
<dbReference type="PaxDb" id="4932-YBL024W"/>
<dbReference type="PeptideAtlas" id="P38205"/>
<dbReference type="EnsemblFungi" id="YBL024W_mRNA">
    <property type="protein sequence ID" value="YBL024W"/>
    <property type="gene ID" value="YBL024W"/>
</dbReference>
<dbReference type="GeneID" id="852257"/>
<dbReference type="KEGG" id="sce:YBL024W"/>
<dbReference type="AGR" id="SGD:S000000120"/>
<dbReference type="SGD" id="S000000120">
    <property type="gene designation" value="NCL1"/>
</dbReference>
<dbReference type="VEuPathDB" id="FungiDB:YBL024W"/>
<dbReference type="eggNOG" id="KOG2198">
    <property type="taxonomic scope" value="Eukaryota"/>
</dbReference>
<dbReference type="GeneTree" id="ENSGT00940000153665"/>
<dbReference type="HOGENOM" id="CLU_005316_4_3_1"/>
<dbReference type="InParanoid" id="P38205"/>
<dbReference type="OMA" id="QLFTEYV"/>
<dbReference type="OrthoDB" id="6093671at2759"/>
<dbReference type="BioCyc" id="MetaCyc:G3O-28927-MONOMER"/>
<dbReference type="BioCyc" id="YEAST:G3O-28927-MONOMER"/>
<dbReference type="BRENDA" id="2.1.1.202">
    <property type="organism ID" value="984"/>
</dbReference>
<dbReference type="BioGRID-ORCS" id="852257">
    <property type="hits" value="4 hits in 10 CRISPR screens"/>
</dbReference>
<dbReference type="PRO" id="PR:P38205"/>
<dbReference type="Proteomes" id="UP000002311">
    <property type="component" value="Chromosome II"/>
</dbReference>
<dbReference type="RNAct" id="P38205">
    <property type="molecule type" value="protein"/>
</dbReference>
<dbReference type="GO" id="GO:0005737">
    <property type="term" value="C:cytoplasm"/>
    <property type="evidence" value="ECO:0000318"/>
    <property type="project" value="GO_Central"/>
</dbReference>
<dbReference type="GO" id="GO:0005730">
    <property type="term" value="C:nucleolus"/>
    <property type="evidence" value="ECO:0007669"/>
    <property type="project" value="UniProtKB-SubCell"/>
</dbReference>
<dbReference type="GO" id="GO:0005654">
    <property type="term" value="C:nucleoplasm"/>
    <property type="evidence" value="ECO:0000304"/>
    <property type="project" value="Reactome"/>
</dbReference>
<dbReference type="GO" id="GO:0005634">
    <property type="term" value="C:nucleus"/>
    <property type="evidence" value="ECO:0000314"/>
    <property type="project" value="SGD"/>
</dbReference>
<dbReference type="GO" id="GO:0016428">
    <property type="term" value="F:tRNA (cytidine-5-)-methyltransferase activity"/>
    <property type="evidence" value="ECO:0000314"/>
    <property type="project" value="SGD"/>
</dbReference>
<dbReference type="GO" id="GO:0000049">
    <property type="term" value="F:tRNA binding"/>
    <property type="evidence" value="ECO:0000314"/>
    <property type="project" value="SGD"/>
</dbReference>
<dbReference type="GO" id="GO:0070301">
    <property type="term" value="P:cellular response to hydrogen peroxide"/>
    <property type="evidence" value="ECO:0000315"/>
    <property type="project" value="SGD"/>
</dbReference>
<dbReference type="GO" id="GO:0030488">
    <property type="term" value="P:tRNA methylation"/>
    <property type="evidence" value="ECO:0000314"/>
    <property type="project" value="SGD"/>
</dbReference>
<dbReference type="GO" id="GO:0006400">
    <property type="term" value="P:tRNA modification"/>
    <property type="evidence" value="ECO:0000304"/>
    <property type="project" value="Reactome"/>
</dbReference>
<dbReference type="GO" id="GO:0002127">
    <property type="term" value="P:tRNA wobble base cytosine methylation"/>
    <property type="evidence" value="ECO:0000315"/>
    <property type="project" value="SGD"/>
</dbReference>
<dbReference type="Gene3D" id="3.40.50.150">
    <property type="entry name" value="Vaccinia Virus protein VP39"/>
    <property type="match status" value="1"/>
</dbReference>
<dbReference type="InterPro" id="IPR049560">
    <property type="entry name" value="MeTrfase_RsmB-F_NOP2_cat"/>
</dbReference>
<dbReference type="InterPro" id="IPR001678">
    <property type="entry name" value="MeTrfase_RsmB-F_NOP2_dom"/>
</dbReference>
<dbReference type="InterPro" id="IPR023267">
    <property type="entry name" value="RCMT"/>
</dbReference>
<dbReference type="InterPro" id="IPR023270">
    <property type="entry name" value="RCMT_NCL1"/>
</dbReference>
<dbReference type="InterPro" id="IPR018314">
    <property type="entry name" value="RsmB/NOL1/NOP2-like_CS"/>
</dbReference>
<dbReference type="InterPro" id="IPR029063">
    <property type="entry name" value="SAM-dependent_MTases_sf"/>
</dbReference>
<dbReference type="PANTHER" id="PTHR22808">
    <property type="entry name" value="NCL1 YEAST -RELATED NOL1/NOP2/FMU SUN DOMAIN-CONTAINING"/>
    <property type="match status" value="1"/>
</dbReference>
<dbReference type="PANTHER" id="PTHR22808:SF1">
    <property type="entry name" value="RNA CYTOSINE-C(5)-METHYLTRANSFERASE NSUN2-RELATED"/>
    <property type="match status" value="1"/>
</dbReference>
<dbReference type="Pfam" id="PF01189">
    <property type="entry name" value="Methyltr_RsmB-F"/>
    <property type="match status" value="1"/>
</dbReference>
<dbReference type="Pfam" id="PF25376">
    <property type="entry name" value="Pre-PUA_NSUN2"/>
    <property type="match status" value="1"/>
</dbReference>
<dbReference type="Pfam" id="PF25378">
    <property type="entry name" value="PUA_NSUN2"/>
    <property type="match status" value="1"/>
</dbReference>
<dbReference type="PRINTS" id="PR02008">
    <property type="entry name" value="RCMTFAMILY"/>
</dbReference>
<dbReference type="PRINTS" id="PR02011">
    <property type="entry name" value="RCMTNCL1"/>
</dbReference>
<dbReference type="SUPFAM" id="SSF53335">
    <property type="entry name" value="S-adenosyl-L-methionine-dependent methyltransferases"/>
    <property type="match status" value="1"/>
</dbReference>
<dbReference type="PROSITE" id="PS01153">
    <property type="entry name" value="NOL1_NOP2_SUN"/>
    <property type="match status" value="1"/>
</dbReference>
<dbReference type="PROSITE" id="PS51686">
    <property type="entry name" value="SAM_MT_RSMB_NOP"/>
    <property type="match status" value="1"/>
</dbReference>
<protein>
    <recommendedName>
        <fullName>Multisite-specific tRNA:(cytosine-C(5))-methyltransferase</fullName>
        <ecNumber>2.1.1.202</ecNumber>
    </recommendedName>
    <alternativeName>
        <fullName>Multisite-specific tRNA:m5C-methyltransferase</fullName>
    </alternativeName>
    <alternativeName>
        <fullName>tRNA (cytosine-5-)-methyltransferase NCL1</fullName>
    </alternativeName>
    <alternativeName>
        <fullName>tRNA methyltransferase 4</fullName>
    </alternativeName>
</protein>
<organism>
    <name type="scientific">Saccharomyces cerevisiae (strain ATCC 204508 / S288c)</name>
    <name type="common">Baker's yeast</name>
    <dbReference type="NCBI Taxonomy" id="559292"/>
    <lineage>
        <taxon>Eukaryota</taxon>
        <taxon>Fungi</taxon>
        <taxon>Dikarya</taxon>
        <taxon>Ascomycota</taxon>
        <taxon>Saccharomycotina</taxon>
        <taxon>Saccharomycetes</taxon>
        <taxon>Saccharomycetales</taxon>
        <taxon>Saccharomycetaceae</taxon>
        <taxon>Saccharomyces</taxon>
    </lineage>
</organism>
<proteinExistence type="evidence at protein level"/>
<name>NCL1_YEAST</name>
<accession>P38205</accession>
<accession>D6VPX6</accession>